<feature type="chain" id="PRO_0000437001" description="BTB/POZ domain and ankyrin repeat-containing protein NPR2">
    <location>
        <begin position="1"/>
        <end position="635"/>
    </location>
</feature>
<feature type="domain" description="BTB" evidence="4">
    <location>
        <begin position="97"/>
        <end position="191"/>
    </location>
</feature>
<feature type="repeat" description="ANK 1" evidence="3">
    <location>
        <begin position="317"/>
        <end position="347"/>
    </location>
</feature>
<feature type="repeat" description="ANK 2" evidence="3">
    <location>
        <begin position="349"/>
        <end position="376"/>
    </location>
</feature>
<feature type="repeat" description="ANK 3" evidence="3">
    <location>
        <begin position="380"/>
        <end position="409"/>
    </location>
</feature>
<feature type="zinc finger region" description="C2HC NPR-type" evidence="5">
    <location>
        <begin position="194"/>
        <end position="208"/>
    </location>
</feature>
<feature type="region of interest" description="Disordered" evidence="6">
    <location>
        <begin position="138"/>
        <end position="157"/>
    </location>
</feature>
<feature type="region of interest" description="Salicylic acid-binding core (SBC)" evidence="2">
    <location>
        <begin position="439"/>
        <end position="576"/>
    </location>
</feature>
<feature type="compositionally biased region" description="Gly residues" evidence="6">
    <location>
        <begin position="138"/>
        <end position="152"/>
    </location>
</feature>
<feature type="binding site" evidence="5">
    <location>
        <position position="197"/>
    </location>
    <ligand>
        <name>Zn(2+)</name>
        <dbReference type="ChEBI" id="CHEBI:29105"/>
    </ligand>
</feature>
<feature type="binding site" evidence="5">
    <location>
        <position position="202"/>
    </location>
    <ligand>
        <name>Zn(2+)</name>
        <dbReference type="ChEBI" id="CHEBI:29105"/>
    </ligand>
</feature>
<feature type="binding site" evidence="5">
    <location>
        <position position="204"/>
    </location>
    <ligand>
        <name>Zn(2+)</name>
        <dbReference type="ChEBI" id="CHEBI:29105"/>
    </ligand>
</feature>
<feature type="binding site" evidence="5">
    <location>
        <position position="207"/>
    </location>
    <ligand>
        <name>Zn(2+)</name>
        <dbReference type="ChEBI" id="CHEBI:29105"/>
    </ligand>
</feature>
<feature type="binding site" evidence="2">
    <location>
        <position position="484"/>
    </location>
    <ligand>
        <name>salicylate</name>
        <dbReference type="ChEBI" id="CHEBI:30762"/>
    </ligand>
</feature>
<evidence type="ECO:0000250" key="1">
    <source>
        <dbReference type="UniProtKB" id="O22286"/>
    </source>
</evidence>
<evidence type="ECO:0000250" key="2">
    <source>
        <dbReference type="UniProtKB" id="Q5ICL9"/>
    </source>
</evidence>
<evidence type="ECO:0000255" key="3"/>
<evidence type="ECO:0000255" key="4">
    <source>
        <dbReference type="PROSITE-ProRule" id="PRU00037"/>
    </source>
</evidence>
<evidence type="ECO:0000255" key="5">
    <source>
        <dbReference type="PROSITE-ProRule" id="PRU01391"/>
    </source>
</evidence>
<evidence type="ECO:0000256" key="6">
    <source>
        <dbReference type="SAM" id="MobiDB-lite"/>
    </source>
</evidence>
<evidence type="ECO:0000269" key="7">
    <source>
    </source>
</evidence>
<evidence type="ECO:0000269" key="8">
    <source>
    </source>
</evidence>
<evidence type="ECO:0000269" key="9">
    <source>
    </source>
</evidence>
<evidence type="ECO:0000303" key="10">
    <source>
    </source>
</evidence>
<evidence type="ECO:0000303" key="11">
    <source>
    </source>
</evidence>
<evidence type="ECO:0000305" key="12"/>
<evidence type="ECO:0000312" key="13">
    <source>
        <dbReference type="EMBL" id="BAD53329.1"/>
    </source>
</evidence>
<evidence type="ECO:0000312" key="14">
    <source>
        <dbReference type="EMBL" id="BAD53355.1"/>
    </source>
</evidence>
<evidence type="ECO:0000312" key="15">
    <source>
        <dbReference type="EMBL" id="BAF06277.1"/>
    </source>
</evidence>
<protein>
    <recommendedName>
        <fullName evidence="12">BTB/POZ domain and ankyrin repeat-containing protein NPR2</fullName>
        <shortName evidence="11">OsNPR2</shortName>
    </recommendedName>
    <alternativeName>
        <fullName evidence="12">NPR1 homolog 2</fullName>
        <shortName evidence="10">OsNH2</shortName>
    </alternativeName>
</protein>
<dbReference type="EMBL" id="DQ450949">
    <property type="protein sequence ID" value="ABE11615.1"/>
    <property type="molecule type" value="mRNA"/>
</dbReference>
<dbReference type="EMBL" id="DQ450950">
    <property type="protein sequence ID" value="ABE11616.1"/>
    <property type="molecule type" value="Genomic_DNA"/>
</dbReference>
<dbReference type="EMBL" id="HM991166">
    <property type="protein sequence ID" value="AEF30409.1"/>
    <property type="molecule type" value="mRNA"/>
</dbReference>
<dbReference type="EMBL" id="AP003371">
    <property type="protein sequence ID" value="BAD53329.1"/>
    <property type="status" value="ALT_INIT"/>
    <property type="molecule type" value="Genomic_DNA"/>
</dbReference>
<dbReference type="EMBL" id="AP003377">
    <property type="protein sequence ID" value="BAD53355.1"/>
    <property type="status" value="ALT_INIT"/>
    <property type="molecule type" value="Genomic_DNA"/>
</dbReference>
<dbReference type="EMBL" id="AP008207">
    <property type="protein sequence ID" value="BAF06277.1"/>
    <property type="molecule type" value="Genomic_DNA"/>
</dbReference>
<dbReference type="EMBL" id="AP014957">
    <property type="protein sequence ID" value="BAS74525.1"/>
    <property type="molecule type" value="Genomic_DNA"/>
</dbReference>
<dbReference type="EMBL" id="AK067198">
    <property type="protein sequence ID" value="BAG90312.1"/>
    <property type="molecule type" value="mRNA"/>
</dbReference>
<dbReference type="EMBL" id="AY923984">
    <property type="protein sequence ID" value="AAX18701.1"/>
    <property type="molecule type" value="mRNA"/>
</dbReference>
<dbReference type="RefSeq" id="XP_015620897.1">
    <property type="nucleotide sequence ID" value="XM_015765411.1"/>
</dbReference>
<dbReference type="SMR" id="Q0JJ01"/>
<dbReference type="FunCoup" id="Q0JJ01">
    <property type="interactions" value="976"/>
</dbReference>
<dbReference type="STRING" id="39947.Q0JJ01"/>
<dbReference type="PaxDb" id="39947-Q0JJ01"/>
<dbReference type="EnsemblPlants" id="Os01t0767900-01">
    <property type="protein sequence ID" value="Os01t0767900-01"/>
    <property type="gene ID" value="Os01g0767900"/>
</dbReference>
<dbReference type="Gramene" id="Os01t0767900-01">
    <property type="protein sequence ID" value="Os01t0767900-01"/>
    <property type="gene ID" value="Os01g0767900"/>
</dbReference>
<dbReference type="KEGG" id="dosa:Os01g0767900"/>
<dbReference type="eggNOG" id="KOG0504">
    <property type="taxonomic scope" value="Eukaryota"/>
</dbReference>
<dbReference type="HOGENOM" id="CLU_034895_1_0_1"/>
<dbReference type="InParanoid" id="Q0JJ01"/>
<dbReference type="OMA" id="PVPVHRC"/>
<dbReference type="OrthoDB" id="71307at2759"/>
<dbReference type="PlantReactome" id="R-OSA-6788019">
    <property type="pathway name" value="Salicylic acid signaling"/>
</dbReference>
<dbReference type="UniPathway" id="UPA00143"/>
<dbReference type="Proteomes" id="UP000000763">
    <property type="component" value="Chromosome 1"/>
</dbReference>
<dbReference type="Proteomes" id="UP000059680">
    <property type="component" value="Chromosome 1"/>
</dbReference>
<dbReference type="GO" id="GO:0005634">
    <property type="term" value="C:nucleus"/>
    <property type="evidence" value="ECO:0000318"/>
    <property type="project" value="GO_Central"/>
</dbReference>
<dbReference type="GO" id="GO:0008270">
    <property type="term" value="F:zinc ion binding"/>
    <property type="evidence" value="ECO:0007669"/>
    <property type="project" value="UniProtKB-KW"/>
</dbReference>
<dbReference type="GO" id="GO:0042742">
    <property type="term" value="P:defense response to bacterium"/>
    <property type="evidence" value="ECO:0000318"/>
    <property type="project" value="GO_Central"/>
</dbReference>
<dbReference type="GO" id="GO:0050832">
    <property type="term" value="P:defense response to fungus"/>
    <property type="evidence" value="ECO:0000318"/>
    <property type="project" value="GO_Central"/>
</dbReference>
<dbReference type="GO" id="GO:2000022">
    <property type="term" value="P:regulation of jasmonic acid mediated signaling pathway"/>
    <property type="evidence" value="ECO:0000318"/>
    <property type="project" value="GO_Central"/>
</dbReference>
<dbReference type="GO" id="GO:2000031">
    <property type="term" value="P:regulation of salicylic acid mediated signaling pathway"/>
    <property type="evidence" value="ECO:0007669"/>
    <property type="project" value="InterPro"/>
</dbReference>
<dbReference type="GO" id="GO:0009862">
    <property type="term" value="P:systemic acquired resistance, salicylic acid mediated signaling pathway"/>
    <property type="evidence" value="ECO:0007669"/>
    <property type="project" value="InterPro"/>
</dbReference>
<dbReference type="CDD" id="cd18310">
    <property type="entry name" value="BTB_POZ_NPR_plant"/>
    <property type="match status" value="1"/>
</dbReference>
<dbReference type="FunFam" id="3.30.710.10:FF:000110">
    <property type="entry name" value="Regulatory protein NPR3"/>
    <property type="match status" value="1"/>
</dbReference>
<dbReference type="FunFam" id="1.25.40.20:FF:000123">
    <property type="entry name" value="regulatory protein NPR3-like"/>
    <property type="match status" value="1"/>
</dbReference>
<dbReference type="Gene3D" id="1.25.40.20">
    <property type="entry name" value="Ankyrin repeat-containing domain"/>
    <property type="match status" value="1"/>
</dbReference>
<dbReference type="Gene3D" id="3.30.710.10">
    <property type="entry name" value="Potassium Channel Kv1.1, Chain A"/>
    <property type="match status" value="1"/>
</dbReference>
<dbReference type="InterPro" id="IPR002110">
    <property type="entry name" value="Ankyrin_rpt"/>
</dbReference>
<dbReference type="InterPro" id="IPR036770">
    <property type="entry name" value="Ankyrin_rpt-contain_sf"/>
</dbReference>
<dbReference type="InterPro" id="IPR000210">
    <property type="entry name" value="BTB/POZ_dom"/>
</dbReference>
<dbReference type="InterPro" id="IPR044292">
    <property type="entry name" value="NPR"/>
</dbReference>
<dbReference type="InterPro" id="IPR021094">
    <property type="entry name" value="NPR1/NIM1-like_C"/>
</dbReference>
<dbReference type="InterPro" id="IPR024228">
    <property type="entry name" value="NPR_central_dom"/>
</dbReference>
<dbReference type="InterPro" id="IPR011333">
    <property type="entry name" value="SKP1/BTB/POZ_sf"/>
</dbReference>
<dbReference type="PANTHER" id="PTHR46475">
    <property type="entry name" value="REGULATORY PROTEIN NPR3"/>
    <property type="match status" value="1"/>
</dbReference>
<dbReference type="PANTHER" id="PTHR46475:SF2">
    <property type="entry name" value="REGULATORY PROTEIN NPR3"/>
    <property type="match status" value="1"/>
</dbReference>
<dbReference type="Pfam" id="PF00023">
    <property type="entry name" value="Ank"/>
    <property type="match status" value="2"/>
</dbReference>
<dbReference type="Pfam" id="PF11900">
    <property type="entry name" value="DUF3420"/>
    <property type="match status" value="1"/>
</dbReference>
<dbReference type="Pfam" id="PF12313">
    <property type="entry name" value="NPR1_like_C"/>
    <property type="match status" value="1"/>
</dbReference>
<dbReference type="SMART" id="SM00248">
    <property type="entry name" value="ANK"/>
    <property type="match status" value="3"/>
</dbReference>
<dbReference type="SMART" id="SM00225">
    <property type="entry name" value="BTB"/>
    <property type="match status" value="1"/>
</dbReference>
<dbReference type="SUPFAM" id="SSF48403">
    <property type="entry name" value="Ankyrin repeat"/>
    <property type="match status" value="1"/>
</dbReference>
<dbReference type="SUPFAM" id="SSF54695">
    <property type="entry name" value="POZ domain"/>
    <property type="match status" value="1"/>
</dbReference>
<dbReference type="PROSITE" id="PS50297">
    <property type="entry name" value="ANK_REP_REGION"/>
    <property type="match status" value="1"/>
</dbReference>
<dbReference type="PROSITE" id="PS50088">
    <property type="entry name" value="ANK_REPEAT"/>
    <property type="match status" value="1"/>
</dbReference>
<dbReference type="PROSITE" id="PS50097">
    <property type="entry name" value="BTB"/>
    <property type="match status" value="1"/>
</dbReference>
<dbReference type="PROSITE" id="PS52046">
    <property type="entry name" value="ZF_C2HC_NPR"/>
    <property type="match status" value="1"/>
</dbReference>
<organism>
    <name type="scientific">Oryza sativa subsp. japonica</name>
    <name type="common">Rice</name>
    <dbReference type="NCBI Taxonomy" id="39947"/>
    <lineage>
        <taxon>Eukaryota</taxon>
        <taxon>Viridiplantae</taxon>
        <taxon>Streptophyta</taxon>
        <taxon>Embryophyta</taxon>
        <taxon>Tracheophyta</taxon>
        <taxon>Spermatophyta</taxon>
        <taxon>Magnoliopsida</taxon>
        <taxon>Liliopsida</taxon>
        <taxon>Poales</taxon>
        <taxon>Poaceae</taxon>
        <taxon>BOP clade</taxon>
        <taxon>Oryzoideae</taxon>
        <taxon>Oryzeae</taxon>
        <taxon>Oryzinae</taxon>
        <taxon>Oryza</taxon>
        <taxon>Oryza sativa</taxon>
    </lineage>
</organism>
<name>NPR2_ORYSJ</name>
<keyword id="KW-0040">ANK repeat</keyword>
<keyword id="KW-0479">Metal-binding</keyword>
<keyword id="KW-0539">Nucleus</keyword>
<keyword id="KW-0611">Plant defense</keyword>
<keyword id="KW-1185">Reference proteome</keyword>
<keyword id="KW-0677">Repeat</keyword>
<keyword id="KW-0833">Ubl conjugation pathway</keyword>
<keyword id="KW-0862">Zinc</keyword>
<keyword id="KW-0863">Zinc-finger</keyword>
<comment type="function">
    <text evidence="1 2 8">Salicylic acid (SA)-binding substrate-specific adapter of an E3 ubiquitin-protein ligase complex (CUL3-RBX1-BTB) which mediates the ubiquitination and subsequent proteasomal degradation of target proteins (By similarity). May be involved in regulating basal defense responses against pathogens, and may be involved in crosstalk between SA- and JA-dependent signaling pathways (By similarity). Does not seem to be involved in defense response against the bacterial blight disease caused by Xanthomonas oryzae pv. oryzae (Xoo) (PubMed:17309686). Over-expression of NPR2/NH2 does not confer disease resistance to Xoo (PubMed:17309686).</text>
</comment>
<comment type="pathway">
    <text evidence="1">Protein modification; protein ubiquitination.</text>
</comment>
<comment type="subunit">
    <text evidence="7 9">Interacts with NRR (PubMed:15986920). Interacts with TGAL1 and TGAL11 (PubMed:24919709).</text>
</comment>
<comment type="subcellular location">
    <subcellularLocation>
        <location evidence="2">Nucleus</location>
    </subcellularLocation>
</comment>
<comment type="domain">
    <text evidence="1">The BTB/POZ domain mediates the interaction with some component of ubiquitin ligase complexes.</text>
</comment>
<comment type="similarity">
    <text evidence="12">Belongs to the plant 'ANKYRIN-BTB/POZ' family. 'NPR1-like' subfamily.</text>
</comment>
<comment type="sequence caution" evidence="12">
    <conflict type="erroneous initiation">
        <sequence resource="EMBL-CDS" id="BAD53329"/>
    </conflict>
    <text>Truncated N-terminus.</text>
</comment>
<comment type="sequence caution" evidence="12">
    <conflict type="erroneous initiation">
        <sequence resource="EMBL-CDS" id="BAD53355"/>
    </conflict>
    <text>Truncated N-terminus.</text>
</comment>
<accession>Q0JJ01</accession>
<accession>Q5D0W7</accession>
<accession>Q5ZAN8</accession>
<gene>
    <name evidence="11" type="primary">NPR2</name>
    <name evidence="10" type="synonym">NH2</name>
    <name evidence="15" type="ordered locus">Os01g0767900</name>
    <name evidence="12" type="ordered locus">LOC_Os01g56200</name>
    <name evidence="13" type="ORF">B1143G03.10</name>
    <name evidence="14" type="ORF">OSJNBb0053G03.24</name>
</gene>
<proteinExistence type="evidence at protein level"/>
<reference key="1">
    <citation type="journal article" date="2007" name="Plant Biotechnol. J.">
        <title>Functional analysis of rice NPR1-like genes reveals that OsNPR1/NH1 is the rice orthologue conferring disease resistance with enhanced herbivore susceptibility.</title>
        <authorList>
            <person name="Yuan Y."/>
            <person name="Zhong S."/>
            <person name="Li Q."/>
            <person name="Zhu Z."/>
            <person name="Lou Y."/>
            <person name="Wang L."/>
            <person name="Wang J."/>
            <person name="Wang M."/>
            <person name="Li Q."/>
            <person name="Yang D."/>
            <person name="He Z."/>
        </authorList>
    </citation>
    <scope>NUCLEOTIDE SEQUENCE [GENOMIC DNA / MRNA]</scope>
    <scope>FUNCTION</scope>
</reference>
<reference key="2">
    <citation type="submission" date="2010-07" db="EMBL/GenBank/DDBJ databases">
        <title>Oryza sativa japonica group cultivar Dongjin putative NPR1-like protein 1 (NPR1) mRNA.</title>
        <authorList>
            <person name="Moon S.-J."/>
            <person name="Shin D."/>
            <person name="Kim B.-G."/>
            <person name="Park S.R."/>
            <person name="Byun M.-O."/>
        </authorList>
    </citation>
    <scope>NUCLEOTIDE SEQUENCE [MRNA]</scope>
    <source>
        <strain>cv. Dongjin</strain>
    </source>
</reference>
<reference key="3">
    <citation type="journal article" date="2002" name="Nature">
        <title>The genome sequence and structure of rice chromosome 1.</title>
        <authorList>
            <person name="Sasaki T."/>
            <person name="Matsumoto T."/>
            <person name="Yamamoto K."/>
            <person name="Sakata K."/>
            <person name="Baba T."/>
            <person name="Katayose Y."/>
            <person name="Wu J."/>
            <person name="Niimura Y."/>
            <person name="Cheng Z."/>
            <person name="Nagamura Y."/>
            <person name="Antonio B.A."/>
            <person name="Kanamori H."/>
            <person name="Hosokawa S."/>
            <person name="Masukawa M."/>
            <person name="Arikawa K."/>
            <person name="Chiden Y."/>
            <person name="Hayashi M."/>
            <person name="Okamoto M."/>
            <person name="Ando T."/>
            <person name="Aoki H."/>
            <person name="Arita K."/>
            <person name="Hamada M."/>
            <person name="Harada C."/>
            <person name="Hijishita S."/>
            <person name="Honda M."/>
            <person name="Ichikawa Y."/>
            <person name="Idonuma A."/>
            <person name="Iijima M."/>
            <person name="Ikeda M."/>
            <person name="Ikeno M."/>
            <person name="Ito S."/>
            <person name="Ito T."/>
            <person name="Ito Y."/>
            <person name="Ito Y."/>
            <person name="Iwabuchi A."/>
            <person name="Kamiya K."/>
            <person name="Karasawa W."/>
            <person name="Katagiri S."/>
            <person name="Kikuta A."/>
            <person name="Kobayashi N."/>
            <person name="Kono I."/>
            <person name="Machita K."/>
            <person name="Maehara T."/>
            <person name="Mizuno H."/>
            <person name="Mizubayashi T."/>
            <person name="Mukai Y."/>
            <person name="Nagasaki H."/>
            <person name="Nakashima M."/>
            <person name="Nakama Y."/>
            <person name="Nakamichi Y."/>
            <person name="Nakamura M."/>
            <person name="Namiki N."/>
            <person name="Negishi M."/>
            <person name="Ohta I."/>
            <person name="Ono N."/>
            <person name="Saji S."/>
            <person name="Sakai K."/>
            <person name="Shibata M."/>
            <person name="Shimokawa T."/>
            <person name="Shomura A."/>
            <person name="Song J."/>
            <person name="Takazaki Y."/>
            <person name="Terasawa K."/>
            <person name="Tsuji K."/>
            <person name="Waki K."/>
            <person name="Yamagata H."/>
            <person name="Yamane H."/>
            <person name="Yoshiki S."/>
            <person name="Yoshihara R."/>
            <person name="Yukawa K."/>
            <person name="Zhong H."/>
            <person name="Iwama H."/>
            <person name="Endo T."/>
            <person name="Ito H."/>
            <person name="Hahn J.H."/>
            <person name="Kim H.-I."/>
            <person name="Eun M.-Y."/>
            <person name="Yano M."/>
            <person name="Jiang J."/>
            <person name="Gojobori T."/>
        </authorList>
    </citation>
    <scope>NUCLEOTIDE SEQUENCE [LARGE SCALE GENOMIC DNA]</scope>
    <source>
        <strain>cv. Nipponbare</strain>
    </source>
</reference>
<reference key="4">
    <citation type="journal article" date="2005" name="Nature">
        <title>The map-based sequence of the rice genome.</title>
        <authorList>
            <consortium name="International rice genome sequencing project (IRGSP)"/>
        </authorList>
    </citation>
    <scope>NUCLEOTIDE SEQUENCE [LARGE SCALE GENOMIC DNA]</scope>
    <source>
        <strain>cv. Nipponbare</strain>
    </source>
</reference>
<reference key="5">
    <citation type="journal article" date="2008" name="Nucleic Acids Res.">
        <title>The rice annotation project database (RAP-DB): 2008 update.</title>
        <authorList>
            <consortium name="The rice annotation project (RAP)"/>
        </authorList>
    </citation>
    <scope>GENOME REANNOTATION</scope>
    <source>
        <strain>cv. Nipponbare</strain>
    </source>
</reference>
<reference key="6">
    <citation type="journal article" date="2013" name="Rice">
        <title>Improvement of the Oryza sativa Nipponbare reference genome using next generation sequence and optical map data.</title>
        <authorList>
            <person name="Kawahara Y."/>
            <person name="de la Bastide M."/>
            <person name="Hamilton J.P."/>
            <person name="Kanamori H."/>
            <person name="McCombie W.R."/>
            <person name="Ouyang S."/>
            <person name="Schwartz D.C."/>
            <person name="Tanaka T."/>
            <person name="Wu J."/>
            <person name="Zhou S."/>
            <person name="Childs K.L."/>
            <person name="Davidson R.M."/>
            <person name="Lin H."/>
            <person name="Quesada-Ocampo L."/>
            <person name="Vaillancourt B."/>
            <person name="Sakai H."/>
            <person name="Lee S.S."/>
            <person name="Kim J."/>
            <person name="Numa H."/>
            <person name="Itoh T."/>
            <person name="Buell C.R."/>
            <person name="Matsumoto T."/>
        </authorList>
    </citation>
    <scope>GENOME REANNOTATION</scope>
    <source>
        <strain>cv. Nipponbare</strain>
    </source>
</reference>
<reference key="7">
    <citation type="journal article" date="2003" name="Science">
        <title>Collection, mapping, and annotation of over 28,000 cDNA clones from japonica rice.</title>
        <authorList>
            <consortium name="The rice full-length cDNA consortium"/>
        </authorList>
    </citation>
    <scope>NUCLEOTIDE SEQUENCE [LARGE SCALE MRNA]</scope>
    <source>
        <strain>cv. Nipponbare</strain>
    </source>
</reference>
<reference key="8">
    <citation type="journal article" date="2005" name="Mol. Plant Microbe Interact.">
        <title>Overexpression of a rice NPR1 homolog leads to constitutive activation of defense response and hypersensitivity to light.</title>
        <authorList>
            <person name="Chern M."/>
            <person name="Fitzgerald H.A."/>
            <person name="Canlas P.E."/>
            <person name="Navarre D.A."/>
            <person name="Ronald P.C."/>
        </authorList>
    </citation>
    <scope>NUCLEOTIDE SEQUENCE [MRNA] OF 430-635</scope>
    <scope>INTERACTION WITH NRR</scope>
</reference>
<reference key="9">
    <citation type="journal article" date="2014" name="BMC Genomics">
        <title>Interaction specificity and coexpression of rice NPR1 homologs 1 and 3 (NH1 and NH3), TGA transcription factors and negative regulator of resistance (NRR) proteins.</title>
        <authorList>
            <person name="Chern M."/>
            <person name="Bai W."/>
            <person name="Ruan D."/>
            <person name="Oh T."/>
            <person name="Chen X."/>
            <person name="Ronald P.C."/>
        </authorList>
    </citation>
    <scope>INTERACTION WITH TGAL1 AND TGAL11</scope>
</reference>
<sequence length="635" mass="68495">MPARSAVVVIAMEPSSSITIASSSSYLSNGSSPCSVSLAPPGAGAVAAQAAPVAAGEGGGGGGGGGGGGSSSVEVVSLNRLSANLERLLLDSDLDCSDADVDVADGGPPVPVHRCILAARSTFFYNLFAARGRGGDGAAGGGGGGGGGGGERTGGRPRYKMEELVPGGRVGRDAFLSLLGYLYTGKLRPAPDDVVSCADPMCPHDSCPPAIRFNVEQMYAAWAFKITELISLFQRRLLNFVDKTLVEDVLPILQVAFHSELTPVLEKCIRRIARSNLDNVSLDKELPPEVAVQIKEIRQKSQPNEGDTVISDPVHEKRVRRIHRALDSDDVELVKLLLNESEITLDDANALHYAAAYCDSKVVSELLDLRLANLNLKNSRGYTALHLAAMRREPAIIMCLLNKGAAVSQLTADGQSAMSICRRLTRMKDYNTKMEQGQESNKDRLCIDILDREMIRKPMAVEDSVTSPLLADDLHMKLLYLENRVAFARLFFPAEAKVAMQIAQADTTPEFGIVPAASTSGKLKEVDLNETPVTQNKRLRSRVDALMKTVELGRRYFPNCSQVLDKFLEDDLPDSPDALDLQNGTSDEQNVKRMRFCELKEDVRKAFSKDRADNSMFSILSSSSSSSPPPKVAKK</sequence>